<feature type="chain" id="PRO_1000198820" description="Anthranilate phosphoribosyltransferase">
    <location>
        <begin position="1"/>
        <end position="336"/>
    </location>
</feature>
<feature type="binding site" evidence="1">
    <location>
        <position position="82"/>
    </location>
    <ligand>
        <name>5-phospho-alpha-D-ribose 1-diphosphate</name>
        <dbReference type="ChEBI" id="CHEBI:58017"/>
    </ligand>
</feature>
<feature type="binding site" evidence="1">
    <location>
        <position position="82"/>
    </location>
    <ligand>
        <name>anthranilate</name>
        <dbReference type="ChEBI" id="CHEBI:16567"/>
        <label>1</label>
    </ligand>
</feature>
<feature type="binding site" evidence="1">
    <location>
        <begin position="85"/>
        <end position="86"/>
    </location>
    <ligand>
        <name>5-phospho-alpha-D-ribose 1-diphosphate</name>
        <dbReference type="ChEBI" id="CHEBI:58017"/>
    </ligand>
</feature>
<feature type="binding site" evidence="1">
    <location>
        <position position="90"/>
    </location>
    <ligand>
        <name>5-phospho-alpha-D-ribose 1-diphosphate</name>
        <dbReference type="ChEBI" id="CHEBI:58017"/>
    </ligand>
</feature>
<feature type="binding site" evidence="1">
    <location>
        <begin position="92"/>
        <end position="95"/>
    </location>
    <ligand>
        <name>5-phospho-alpha-D-ribose 1-diphosphate</name>
        <dbReference type="ChEBI" id="CHEBI:58017"/>
    </ligand>
</feature>
<feature type="binding site" evidence="1">
    <location>
        <position position="94"/>
    </location>
    <ligand>
        <name>Mg(2+)</name>
        <dbReference type="ChEBI" id="CHEBI:18420"/>
        <label>1</label>
    </ligand>
</feature>
<feature type="binding site" evidence="1">
    <location>
        <begin position="110"/>
        <end position="118"/>
    </location>
    <ligand>
        <name>5-phospho-alpha-D-ribose 1-diphosphate</name>
        <dbReference type="ChEBI" id="CHEBI:58017"/>
    </ligand>
</feature>
<feature type="binding site" evidence="1">
    <location>
        <position position="113"/>
    </location>
    <ligand>
        <name>anthranilate</name>
        <dbReference type="ChEBI" id="CHEBI:16567"/>
        <label>1</label>
    </ligand>
</feature>
<feature type="binding site" evidence="1">
    <location>
        <position position="122"/>
    </location>
    <ligand>
        <name>5-phospho-alpha-D-ribose 1-diphosphate</name>
        <dbReference type="ChEBI" id="CHEBI:58017"/>
    </ligand>
</feature>
<feature type="binding site" evidence="1">
    <location>
        <position position="168"/>
    </location>
    <ligand>
        <name>anthranilate</name>
        <dbReference type="ChEBI" id="CHEBI:16567"/>
        <label>2</label>
    </ligand>
</feature>
<feature type="binding site" evidence="1">
    <location>
        <position position="227"/>
    </location>
    <ligand>
        <name>Mg(2+)</name>
        <dbReference type="ChEBI" id="CHEBI:18420"/>
        <label>2</label>
    </ligand>
</feature>
<feature type="binding site" evidence="1">
    <location>
        <position position="228"/>
    </location>
    <ligand>
        <name>Mg(2+)</name>
        <dbReference type="ChEBI" id="CHEBI:18420"/>
        <label>1</label>
    </ligand>
</feature>
<feature type="binding site" evidence="1">
    <location>
        <position position="228"/>
    </location>
    <ligand>
        <name>Mg(2+)</name>
        <dbReference type="ChEBI" id="CHEBI:18420"/>
        <label>2</label>
    </ligand>
</feature>
<reference key="1">
    <citation type="journal article" date="2012" name="BMC Microbiol.">
        <title>Genome sequence of Desulfitobacterium hafniense DCB-2, a Gram-positive anaerobe capable of dehalogenation and metal reduction.</title>
        <authorList>
            <person name="Kim S.H."/>
            <person name="Harzman C."/>
            <person name="Davis J.K."/>
            <person name="Hutcheson R."/>
            <person name="Broderick J.B."/>
            <person name="Marsh T.L."/>
            <person name="Tiedje J.M."/>
        </authorList>
    </citation>
    <scope>NUCLEOTIDE SEQUENCE [LARGE SCALE GENOMIC DNA]</scope>
    <source>
        <strain>DSM 10664 / DCB-2</strain>
    </source>
</reference>
<evidence type="ECO:0000255" key="1">
    <source>
        <dbReference type="HAMAP-Rule" id="MF_00211"/>
    </source>
</evidence>
<protein>
    <recommendedName>
        <fullName evidence="1">Anthranilate phosphoribosyltransferase</fullName>
        <ecNumber evidence="1">2.4.2.18</ecNumber>
    </recommendedName>
</protein>
<sequence>MTYAIHESLTLLSQKQNLPEELTFTVVQDLLSGELTPAQIGGLLLGLSLKGETPEEIAAFAQALRGAGLKIKAPAGTLDTCGTGGDRSGTFNISTTAAFVIAGAGVPVAKHGNRFASGRCGSADVLEQLGISLKATPESSERHLQHIGMTFLFAQVYHPAMAKVARERRELGIRTIFNLLGPLLNPAGAPYQLLGVSSPSLLPKMAKALQILGSKRAVVAVGEDGLDEVTLTGATQAILIDGGAIQPFIIRPEEYGLNLCSLQDLQGGTPAENGQITLRILQGKKGPQRDIVLLNAGTALYAANKAAGIREGIALAAESLDSGKALSILEKLKASA</sequence>
<comment type="function">
    <text evidence="1">Catalyzes the transfer of the phosphoribosyl group of 5-phosphorylribose-1-pyrophosphate (PRPP) to anthranilate to yield N-(5'-phosphoribosyl)-anthranilate (PRA).</text>
</comment>
<comment type="catalytic activity">
    <reaction evidence="1">
        <text>N-(5-phospho-beta-D-ribosyl)anthranilate + diphosphate = 5-phospho-alpha-D-ribose 1-diphosphate + anthranilate</text>
        <dbReference type="Rhea" id="RHEA:11768"/>
        <dbReference type="ChEBI" id="CHEBI:16567"/>
        <dbReference type="ChEBI" id="CHEBI:18277"/>
        <dbReference type="ChEBI" id="CHEBI:33019"/>
        <dbReference type="ChEBI" id="CHEBI:58017"/>
        <dbReference type="EC" id="2.4.2.18"/>
    </reaction>
</comment>
<comment type="cofactor">
    <cofactor evidence="1">
        <name>Mg(2+)</name>
        <dbReference type="ChEBI" id="CHEBI:18420"/>
    </cofactor>
    <text evidence="1">Binds 2 magnesium ions per monomer.</text>
</comment>
<comment type="pathway">
    <text evidence="1">Amino-acid biosynthesis; L-tryptophan biosynthesis; L-tryptophan from chorismate: step 2/5.</text>
</comment>
<comment type="subunit">
    <text evidence="1">Homodimer.</text>
</comment>
<comment type="similarity">
    <text evidence="1">Belongs to the anthranilate phosphoribosyltransferase family.</text>
</comment>
<organism>
    <name type="scientific">Desulfitobacterium hafniense (strain DSM 10664 / DCB-2)</name>
    <dbReference type="NCBI Taxonomy" id="272564"/>
    <lineage>
        <taxon>Bacteria</taxon>
        <taxon>Bacillati</taxon>
        <taxon>Bacillota</taxon>
        <taxon>Clostridia</taxon>
        <taxon>Eubacteriales</taxon>
        <taxon>Desulfitobacteriaceae</taxon>
        <taxon>Desulfitobacterium</taxon>
    </lineage>
</organism>
<dbReference type="EC" id="2.4.2.18" evidence="1"/>
<dbReference type="EMBL" id="CP001336">
    <property type="protein sequence ID" value="ACL22377.1"/>
    <property type="molecule type" value="Genomic_DNA"/>
</dbReference>
<dbReference type="RefSeq" id="WP_005816888.1">
    <property type="nucleotide sequence ID" value="NC_011830.1"/>
</dbReference>
<dbReference type="SMR" id="B8FVH5"/>
<dbReference type="KEGG" id="dhd:Dhaf_4372"/>
<dbReference type="HOGENOM" id="CLU_034315_2_1_9"/>
<dbReference type="UniPathway" id="UPA00035">
    <property type="reaction ID" value="UER00041"/>
</dbReference>
<dbReference type="Proteomes" id="UP000007726">
    <property type="component" value="Chromosome"/>
</dbReference>
<dbReference type="GO" id="GO:0005829">
    <property type="term" value="C:cytosol"/>
    <property type="evidence" value="ECO:0007669"/>
    <property type="project" value="TreeGrafter"/>
</dbReference>
<dbReference type="GO" id="GO:0004048">
    <property type="term" value="F:anthranilate phosphoribosyltransferase activity"/>
    <property type="evidence" value="ECO:0007669"/>
    <property type="project" value="UniProtKB-UniRule"/>
</dbReference>
<dbReference type="GO" id="GO:0000287">
    <property type="term" value="F:magnesium ion binding"/>
    <property type="evidence" value="ECO:0007669"/>
    <property type="project" value="UniProtKB-UniRule"/>
</dbReference>
<dbReference type="GO" id="GO:0000162">
    <property type="term" value="P:L-tryptophan biosynthetic process"/>
    <property type="evidence" value="ECO:0007669"/>
    <property type="project" value="UniProtKB-UniRule"/>
</dbReference>
<dbReference type="FunFam" id="3.40.1030.10:FF:000002">
    <property type="entry name" value="Anthranilate phosphoribosyltransferase"/>
    <property type="match status" value="1"/>
</dbReference>
<dbReference type="Gene3D" id="3.40.1030.10">
    <property type="entry name" value="Nucleoside phosphorylase/phosphoribosyltransferase catalytic domain"/>
    <property type="match status" value="1"/>
</dbReference>
<dbReference type="Gene3D" id="1.20.970.10">
    <property type="entry name" value="Transferase, Pyrimidine Nucleoside Phosphorylase, Chain C"/>
    <property type="match status" value="1"/>
</dbReference>
<dbReference type="HAMAP" id="MF_00211">
    <property type="entry name" value="TrpD"/>
    <property type="match status" value="1"/>
</dbReference>
<dbReference type="InterPro" id="IPR005940">
    <property type="entry name" value="Anthranilate_Pribosyl_Tfrase"/>
</dbReference>
<dbReference type="InterPro" id="IPR000312">
    <property type="entry name" value="Glycosyl_Trfase_fam3"/>
</dbReference>
<dbReference type="InterPro" id="IPR017459">
    <property type="entry name" value="Glycosyl_Trfase_fam3_N_dom"/>
</dbReference>
<dbReference type="InterPro" id="IPR036320">
    <property type="entry name" value="Glycosyl_Trfase_fam3_N_dom_sf"/>
</dbReference>
<dbReference type="InterPro" id="IPR035902">
    <property type="entry name" value="Nuc_phospho_transferase"/>
</dbReference>
<dbReference type="NCBIfam" id="TIGR01245">
    <property type="entry name" value="trpD"/>
    <property type="match status" value="1"/>
</dbReference>
<dbReference type="PANTHER" id="PTHR43285">
    <property type="entry name" value="ANTHRANILATE PHOSPHORIBOSYLTRANSFERASE"/>
    <property type="match status" value="1"/>
</dbReference>
<dbReference type="PANTHER" id="PTHR43285:SF2">
    <property type="entry name" value="ANTHRANILATE PHOSPHORIBOSYLTRANSFERASE"/>
    <property type="match status" value="1"/>
</dbReference>
<dbReference type="Pfam" id="PF02885">
    <property type="entry name" value="Glycos_trans_3N"/>
    <property type="match status" value="1"/>
</dbReference>
<dbReference type="Pfam" id="PF00591">
    <property type="entry name" value="Glycos_transf_3"/>
    <property type="match status" value="1"/>
</dbReference>
<dbReference type="SUPFAM" id="SSF52418">
    <property type="entry name" value="Nucleoside phosphorylase/phosphoribosyltransferase catalytic domain"/>
    <property type="match status" value="1"/>
</dbReference>
<dbReference type="SUPFAM" id="SSF47648">
    <property type="entry name" value="Nucleoside phosphorylase/phosphoribosyltransferase N-terminal domain"/>
    <property type="match status" value="1"/>
</dbReference>
<gene>
    <name evidence="1" type="primary">trpD</name>
    <name type="ordered locus">Dhaf_4372</name>
</gene>
<accession>B8FVH5</accession>
<proteinExistence type="inferred from homology"/>
<keyword id="KW-0028">Amino-acid biosynthesis</keyword>
<keyword id="KW-0057">Aromatic amino acid biosynthesis</keyword>
<keyword id="KW-0328">Glycosyltransferase</keyword>
<keyword id="KW-0460">Magnesium</keyword>
<keyword id="KW-0479">Metal-binding</keyword>
<keyword id="KW-0808">Transferase</keyword>
<keyword id="KW-0822">Tryptophan biosynthesis</keyword>
<name>TRPD_DESHD</name>